<name>FABA_MARMM</name>
<accession>Q0AK52</accession>
<proteinExistence type="inferred from homology"/>
<comment type="function">
    <text evidence="1">Necessary for the introduction of cis unsaturation into fatty acids. Catalyzes the dehydration of (3R)-3-hydroxydecanoyl-ACP to E-(2)-decenoyl-ACP and then its isomerization to Z-(3)-decenoyl-ACP. Can catalyze the dehydratase reaction for beta-hydroxyacyl-ACPs with saturated chain lengths up to 16:0, being most active on intermediate chain length.</text>
</comment>
<comment type="catalytic activity">
    <reaction evidence="1">
        <text>a (3R)-hydroxyacyl-[ACP] = a (2E)-enoyl-[ACP] + H2O</text>
        <dbReference type="Rhea" id="RHEA:13097"/>
        <dbReference type="Rhea" id="RHEA-COMP:9925"/>
        <dbReference type="Rhea" id="RHEA-COMP:9945"/>
        <dbReference type="ChEBI" id="CHEBI:15377"/>
        <dbReference type="ChEBI" id="CHEBI:78784"/>
        <dbReference type="ChEBI" id="CHEBI:78827"/>
        <dbReference type="EC" id="4.2.1.59"/>
    </reaction>
</comment>
<comment type="catalytic activity">
    <reaction evidence="1">
        <text>(3R)-hydroxydecanoyl-[ACP] = (2E)-decenoyl-[ACP] + H2O</text>
        <dbReference type="Rhea" id="RHEA:41860"/>
        <dbReference type="Rhea" id="RHEA-COMP:9638"/>
        <dbReference type="Rhea" id="RHEA-COMP:9639"/>
        <dbReference type="ChEBI" id="CHEBI:15377"/>
        <dbReference type="ChEBI" id="CHEBI:78466"/>
        <dbReference type="ChEBI" id="CHEBI:78467"/>
    </reaction>
</comment>
<comment type="catalytic activity">
    <reaction evidence="1">
        <text>(2E)-decenoyl-[ACP] = (3Z)-decenoyl-[ACP]</text>
        <dbReference type="Rhea" id="RHEA:23568"/>
        <dbReference type="Rhea" id="RHEA-COMP:9639"/>
        <dbReference type="Rhea" id="RHEA-COMP:9927"/>
        <dbReference type="ChEBI" id="CHEBI:78467"/>
        <dbReference type="ChEBI" id="CHEBI:78798"/>
        <dbReference type="EC" id="5.3.3.14"/>
    </reaction>
</comment>
<comment type="pathway">
    <text evidence="1">Lipid metabolism; fatty acid biosynthesis.</text>
</comment>
<comment type="subunit">
    <text evidence="1">Homodimer.</text>
</comment>
<comment type="subcellular location">
    <subcellularLocation>
        <location evidence="1">Cytoplasm</location>
    </subcellularLocation>
</comment>
<comment type="similarity">
    <text evidence="1">Belongs to the thioester dehydratase family. FabA subfamily.</text>
</comment>
<protein>
    <recommendedName>
        <fullName evidence="1">3-hydroxydecanoyl-[acyl-carrier-protein] dehydratase</fullName>
        <ecNumber evidence="1">4.2.1.59</ecNumber>
    </recommendedName>
    <alternativeName>
        <fullName evidence="1">3-hydroxyacyl-[acyl-carrier-protein] dehydratase FabA</fullName>
    </alternativeName>
    <alternativeName>
        <fullName evidence="1">Beta-hydroxydecanoyl thioester dehydrase</fullName>
    </alternativeName>
    <alternativeName>
        <fullName evidence="1">Trans-2-decenoyl-[acyl-carrier-protein] isomerase</fullName>
        <ecNumber evidence="1">5.3.3.14</ecNumber>
    </alternativeName>
</protein>
<keyword id="KW-0963">Cytoplasm</keyword>
<keyword id="KW-0275">Fatty acid biosynthesis</keyword>
<keyword id="KW-0276">Fatty acid metabolism</keyword>
<keyword id="KW-0413">Isomerase</keyword>
<keyword id="KW-0444">Lipid biosynthesis</keyword>
<keyword id="KW-0443">Lipid metabolism</keyword>
<keyword id="KW-0456">Lyase</keyword>
<keyword id="KW-1185">Reference proteome</keyword>
<organism>
    <name type="scientific">Maricaulis maris (strain MCS10)</name>
    <name type="common">Caulobacter maris</name>
    <dbReference type="NCBI Taxonomy" id="394221"/>
    <lineage>
        <taxon>Bacteria</taxon>
        <taxon>Pseudomonadati</taxon>
        <taxon>Pseudomonadota</taxon>
        <taxon>Alphaproteobacteria</taxon>
        <taxon>Maricaulales</taxon>
        <taxon>Maricaulaceae</taxon>
        <taxon>Maricaulis</taxon>
    </lineage>
</organism>
<dbReference type="EC" id="4.2.1.59" evidence="1"/>
<dbReference type="EC" id="5.3.3.14" evidence="1"/>
<dbReference type="EMBL" id="CP000449">
    <property type="protein sequence ID" value="ABI67341.1"/>
    <property type="molecule type" value="Genomic_DNA"/>
</dbReference>
<dbReference type="RefSeq" id="WP_011644985.1">
    <property type="nucleotide sequence ID" value="NC_008347.1"/>
</dbReference>
<dbReference type="SMR" id="Q0AK52"/>
<dbReference type="STRING" id="394221.Mmar10_3060"/>
<dbReference type="KEGG" id="mmr:Mmar10_3060"/>
<dbReference type="eggNOG" id="COG0764">
    <property type="taxonomic scope" value="Bacteria"/>
</dbReference>
<dbReference type="HOGENOM" id="CLU_097925_0_0_5"/>
<dbReference type="OrthoDB" id="9786735at2"/>
<dbReference type="UniPathway" id="UPA00094"/>
<dbReference type="Proteomes" id="UP000001964">
    <property type="component" value="Chromosome"/>
</dbReference>
<dbReference type="GO" id="GO:0005737">
    <property type="term" value="C:cytoplasm"/>
    <property type="evidence" value="ECO:0007669"/>
    <property type="project" value="UniProtKB-SubCell"/>
</dbReference>
<dbReference type="GO" id="GO:0019171">
    <property type="term" value="F:(3R)-hydroxyacyl-[acyl-carrier-protein] dehydratase activity"/>
    <property type="evidence" value="ECO:0007669"/>
    <property type="project" value="UniProtKB-UniRule"/>
</dbReference>
<dbReference type="GO" id="GO:0034017">
    <property type="term" value="F:trans-2-decenoyl-acyl-carrier-protein isomerase activity"/>
    <property type="evidence" value="ECO:0007669"/>
    <property type="project" value="UniProtKB-UniRule"/>
</dbReference>
<dbReference type="GO" id="GO:0006636">
    <property type="term" value="P:unsaturated fatty acid biosynthetic process"/>
    <property type="evidence" value="ECO:0007669"/>
    <property type="project" value="UniProtKB-UniRule"/>
</dbReference>
<dbReference type="CDD" id="cd01287">
    <property type="entry name" value="FabA"/>
    <property type="match status" value="1"/>
</dbReference>
<dbReference type="Gene3D" id="3.10.129.10">
    <property type="entry name" value="Hotdog Thioesterase"/>
    <property type="match status" value="1"/>
</dbReference>
<dbReference type="HAMAP" id="MF_00405">
    <property type="entry name" value="FabA"/>
    <property type="match status" value="1"/>
</dbReference>
<dbReference type="InterPro" id="IPR010083">
    <property type="entry name" value="FabA"/>
</dbReference>
<dbReference type="InterPro" id="IPR013114">
    <property type="entry name" value="FabA_FabZ"/>
</dbReference>
<dbReference type="InterPro" id="IPR029069">
    <property type="entry name" value="HotDog_dom_sf"/>
</dbReference>
<dbReference type="NCBIfam" id="TIGR01749">
    <property type="entry name" value="fabA"/>
    <property type="match status" value="1"/>
</dbReference>
<dbReference type="NCBIfam" id="NF003509">
    <property type="entry name" value="PRK05174.1"/>
    <property type="match status" value="1"/>
</dbReference>
<dbReference type="PANTHER" id="PTHR30272">
    <property type="entry name" value="3-HYDROXYACYL-[ACYL-CARRIER-PROTEIN] DEHYDRATASE"/>
    <property type="match status" value="1"/>
</dbReference>
<dbReference type="PANTHER" id="PTHR30272:SF8">
    <property type="entry name" value="3-HYDROXYDECANOYL-[ACYL-CARRIER-PROTEIN] DEHYDRATASE"/>
    <property type="match status" value="1"/>
</dbReference>
<dbReference type="Pfam" id="PF07977">
    <property type="entry name" value="FabA"/>
    <property type="match status" value="1"/>
</dbReference>
<dbReference type="SUPFAM" id="SSF54637">
    <property type="entry name" value="Thioesterase/thiol ester dehydrase-isomerase"/>
    <property type="match status" value="1"/>
</dbReference>
<feature type="chain" id="PRO_0000267733" description="3-hydroxydecanoyl-[acyl-carrier-protein] dehydratase">
    <location>
        <begin position="1"/>
        <end position="172"/>
    </location>
</feature>
<feature type="active site" evidence="1">
    <location>
        <position position="71"/>
    </location>
</feature>
<gene>
    <name evidence="1" type="primary">fabA</name>
    <name type="ordered locus">Mmar10_3060</name>
</gene>
<reference key="1">
    <citation type="submission" date="2006-08" db="EMBL/GenBank/DDBJ databases">
        <title>Complete sequence of Maricaulis maris MCS10.</title>
        <authorList>
            <consortium name="US DOE Joint Genome Institute"/>
            <person name="Copeland A."/>
            <person name="Lucas S."/>
            <person name="Lapidus A."/>
            <person name="Barry K."/>
            <person name="Detter J.C."/>
            <person name="Glavina del Rio T."/>
            <person name="Hammon N."/>
            <person name="Israni S."/>
            <person name="Dalin E."/>
            <person name="Tice H."/>
            <person name="Pitluck S."/>
            <person name="Saunders E."/>
            <person name="Brettin T."/>
            <person name="Bruce D."/>
            <person name="Han C."/>
            <person name="Tapia R."/>
            <person name="Gilna P."/>
            <person name="Schmutz J."/>
            <person name="Larimer F."/>
            <person name="Land M."/>
            <person name="Hauser L."/>
            <person name="Kyrpides N."/>
            <person name="Mikhailova N."/>
            <person name="Viollier P."/>
            <person name="Stephens C."/>
            <person name="Richardson P."/>
        </authorList>
    </citation>
    <scope>NUCLEOTIDE SEQUENCE [LARGE SCALE GENOMIC DNA]</scope>
    <source>
        <strain>MCS10</strain>
    </source>
</reference>
<sequence length="172" mass="19220">MTERQSSFSYNDLIDSSNGKMWGPDNAQLPAPPMLMMDRITHIDDETGEHGKGQIVAELDIKPDLWFFDCHFKGDPVMPGCLGLDAMWQLVGFFLCWKGNPGKGRALGVGEVKFTGQITPDCKKVRYVIDLKRVIQRRLIMAIGDGRVEVDGKTIYTAKDLRVGLFKPGEMA</sequence>
<evidence type="ECO:0000255" key="1">
    <source>
        <dbReference type="HAMAP-Rule" id="MF_00405"/>
    </source>
</evidence>